<organism>
    <name type="scientific">Loxosceles sabina</name>
    <name type="common">Tucson recluse spider</name>
    <dbReference type="NCBI Taxonomy" id="571529"/>
    <lineage>
        <taxon>Eukaryota</taxon>
        <taxon>Metazoa</taxon>
        <taxon>Ecdysozoa</taxon>
        <taxon>Arthropoda</taxon>
        <taxon>Chelicerata</taxon>
        <taxon>Arachnida</taxon>
        <taxon>Araneae</taxon>
        <taxon>Araneomorphae</taxon>
        <taxon>Haplogynae</taxon>
        <taxon>Scytodoidea</taxon>
        <taxon>Sicariidae</taxon>
        <taxon>Loxosceles</taxon>
    </lineage>
</organism>
<proteinExistence type="evidence at transcript level"/>
<accession>C0JAY1</accession>
<keyword id="KW-0204">Cytolysis</keyword>
<keyword id="KW-1061">Dermonecrotic toxin</keyword>
<keyword id="KW-1015">Disulfide bond</keyword>
<keyword id="KW-0354">Hemolysis</keyword>
<keyword id="KW-0442">Lipid degradation</keyword>
<keyword id="KW-0443">Lipid metabolism</keyword>
<keyword id="KW-0456">Lyase</keyword>
<keyword id="KW-0460">Magnesium</keyword>
<keyword id="KW-0479">Metal-binding</keyword>
<keyword id="KW-0964">Secreted</keyword>
<keyword id="KW-0800">Toxin</keyword>
<reference key="1">
    <citation type="journal article" date="2009" name="Mol. Biol. Evol.">
        <title>Molecular evolution, functional variation, and proposed nomenclature of the gene family that includes sphingomyelinase D in sicariid spider venoms.</title>
        <authorList>
            <person name="Binford G.J."/>
            <person name="Bodner M.R."/>
            <person name="Cordes M.H."/>
            <person name="Baldwin K.L."/>
            <person name="Rynerson M.R."/>
            <person name="Burns S.N."/>
            <person name="Zobel-Thropp P.A."/>
        </authorList>
    </citation>
    <scope>NUCLEOTIDE SEQUENCE [MRNA]</scope>
    <scope>NOMENCLATURE</scope>
    <source>
        <tissue>Venom gland</tissue>
    </source>
</reference>
<dbReference type="EC" id="4.6.1.-" evidence="4"/>
<dbReference type="EMBL" id="FJ171416">
    <property type="protein sequence ID" value="ACN48912.1"/>
    <property type="molecule type" value="mRNA"/>
</dbReference>
<dbReference type="EMBL" id="FJ171421">
    <property type="protein sequence ID" value="ACN48917.1"/>
    <property type="molecule type" value="mRNA"/>
</dbReference>
<dbReference type="EMBL" id="FJ171422">
    <property type="protein sequence ID" value="ACN48918.1"/>
    <property type="molecule type" value="mRNA"/>
</dbReference>
<dbReference type="SMR" id="C0JAY1"/>
<dbReference type="GO" id="GO:0005576">
    <property type="term" value="C:extracellular region"/>
    <property type="evidence" value="ECO:0007669"/>
    <property type="project" value="UniProtKB-SubCell"/>
</dbReference>
<dbReference type="GO" id="GO:0016829">
    <property type="term" value="F:lyase activity"/>
    <property type="evidence" value="ECO:0007669"/>
    <property type="project" value="UniProtKB-KW"/>
</dbReference>
<dbReference type="GO" id="GO:0046872">
    <property type="term" value="F:metal ion binding"/>
    <property type="evidence" value="ECO:0007669"/>
    <property type="project" value="UniProtKB-KW"/>
</dbReference>
<dbReference type="GO" id="GO:0008081">
    <property type="term" value="F:phosphoric diester hydrolase activity"/>
    <property type="evidence" value="ECO:0007669"/>
    <property type="project" value="InterPro"/>
</dbReference>
<dbReference type="GO" id="GO:0090729">
    <property type="term" value="F:toxin activity"/>
    <property type="evidence" value="ECO:0007669"/>
    <property type="project" value="UniProtKB-KW"/>
</dbReference>
<dbReference type="GO" id="GO:0031640">
    <property type="term" value="P:killing of cells of another organism"/>
    <property type="evidence" value="ECO:0007669"/>
    <property type="project" value="UniProtKB-KW"/>
</dbReference>
<dbReference type="GO" id="GO:0016042">
    <property type="term" value="P:lipid catabolic process"/>
    <property type="evidence" value="ECO:0007669"/>
    <property type="project" value="UniProtKB-KW"/>
</dbReference>
<dbReference type="CDD" id="cd08576">
    <property type="entry name" value="GDPD_like_SMaseD_PLD"/>
    <property type="match status" value="1"/>
</dbReference>
<dbReference type="Gene3D" id="3.20.20.190">
    <property type="entry name" value="Phosphatidylinositol (PI) phosphodiesterase"/>
    <property type="match status" value="1"/>
</dbReference>
<dbReference type="InterPro" id="IPR017946">
    <property type="entry name" value="PLC-like_Pdiesterase_TIM-brl"/>
</dbReference>
<dbReference type="Pfam" id="PF13653">
    <property type="entry name" value="GDPD_2"/>
    <property type="match status" value="1"/>
</dbReference>
<dbReference type="SUPFAM" id="SSF51695">
    <property type="entry name" value="PLC-like phosphodiesterases"/>
    <property type="match status" value="1"/>
</dbReference>
<name>A1KA1_LOXSA</name>
<feature type="chain" id="PRO_0000392765" description="Dermonecrotic toxin LsaSicTox-alphaIB1ai">
    <location>
        <begin position="1" status="less than"/>
        <end position="273"/>
    </location>
</feature>
<feature type="active site" evidence="5">
    <location>
        <position position="5"/>
    </location>
</feature>
<feature type="active site" description="Nucleophile" evidence="5">
    <location>
        <position position="41"/>
    </location>
</feature>
<feature type="binding site" evidence="5">
    <location>
        <position position="25"/>
    </location>
    <ligand>
        <name>Mg(2+)</name>
        <dbReference type="ChEBI" id="CHEBI:18420"/>
    </ligand>
</feature>
<feature type="binding site" evidence="5">
    <location>
        <position position="27"/>
    </location>
    <ligand>
        <name>Mg(2+)</name>
        <dbReference type="ChEBI" id="CHEBI:18420"/>
    </ligand>
</feature>
<feature type="binding site" evidence="5">
    <location>
        <position position="85"/>
    </location>
    <ligand>
        <name>Mg(2+)</name>
        <dbReference type="ChEBI" id="CHEBI:18420"/>
    </ligand>
</feature>
<feature type="disulfide bond" evidence="3">
    <location>
        <begin position="45"/>
        <end position="51"/>
    </location>
</feature>
<feature type="disulfide bond" evidence="3">
    <location>
        <begin position="47"/>
        <end position="190"/>
    </location>
</feature>
<feature type="non-terminal residue">
    <location>
        <position position="1"/>
    </location>
</feature>
<sequence>WIMGHMVNAIAQIDEFVNLGANSIETDVSFDKNANPEYTYHGIPCDCGRTCTKWEYFNTFLGGLRKATTPGDSKYHEKLVLVVFDLKTGSLYDNQAYDAGTKLAKSLLQNYWNKGNNGGRAYIVLSIPNLDHYKLITGFKETLTKEEHPELMDKVGYDFSGNDDIGDVAKAYKKAGVTGHVWQSDGITNCLLRGLDRVRKAVANRDSSNGYINKVYYWTVDKRASTRDALDAGVDGIMTNYPDVIADVLSESAYTAKFRIATYDDNPWETFKN</sequence>
<comment type="function">
    <text evidence="1 3">Dermonecrotic toxins cleave the phosphodiester linkage between the phosphate and headgroup of certain phospholipids (sphingolipid and lysolipid substrates), forming an alcohol (often choline) and a cyclic phosphate (By similarity). This toxin acts on sphingomyelin (SM) (By similarity). It may also act on ceramide phosphoethanolamine (CPE), lysophosphatidylcholine (LPC) and lysophosphatidylethanolamine (LPE), but not on lysophosphatidylserine (LPS), and lysophosphatidylglycerol (LPG) (By similarity). It acts by transphosphatidylation, releasing exclusively cyclic phosphate products as second products (By similarity). Induces dermonecrosis, hemolysis, increased vascular permeability, edema, inflammatory response, and platelet aggregation (By similarity).</text>
</comment>
<comment type="catalytic activity">
    <reaction evidence="1">
        <text>an N-(acyl)-sphingosylphosphocholine = an N-(acyl)-sphingosyl-1,3-cyclic phosphate + choline</text>
        <dbReference type="Rhea" id="RHEA:60652"/>
        <dbReference type="ChEBI" id="CHEBI:15354"/>
        <dbReference type="ChEBI" id="CHEBI:64583"/>
        <dbReference type="ChEBI" id="CHEBI:143892"/>
    </reaction>
</comment>
<comment type="catalytic activity">
    <reaction evidence="1">
        <text>an N-(acyl)-sphingosylphosphoethanolamine = an N-(acyl)-sphingosyl-1,3-cyclic phosphate + ethanolamine</text>
        <dbReference type="Rhea" id="RHEA:60648"/>
        <dbReference type="ChEBI" id="CHEBI:57603"/>
        <dbReference type="ChEBI" id="CHEBI:143891"/>
        <dbReference type="ChEBI" id="CHEBI:143892"/>
    </reaction>
</comment>
<comment type="catalytic activity">
    <reaction evidence="1">
        <text>a 1-acyl-sn-glycero-3-phosphocholine = a 1-acyl-sn-glycero-2,3-cyclic phosphate + choline</text>
        <dbReference type="Rhea" id="RHEA:60700"/>
        <dbReference type="ChEBI" id="CHEBI:15354"/>
        <dbReference type="ChEBI" id="CHEBI:58168"/>
        <dbReference type="ChEBI" id="CHEBI:143947"/>
    </reaction>
</comment>
<comment type="catalytic activity">
    <reaction evidence="1">
        <text>a 1-acyl-sn-glycero-3-phosphoethanolamine = a 1-acyl-sn-glycero-2,3-cyclic phosphate + ethanolamine</text>
        <dbReference type="Rhea" id="RHEA:60704"/>
        <dbReference type="ChEBI" id="CHEBI:57603"/>
        <dbReference type="ChEBI" id="CHEBI:64381"/>
        <dbReference type="ChEBI" id="CHEBI:143947"/>
    </reaction>
</comment>
<comment type="cofactor">
    <cofactor evidence="5">
        <name>Mg(2+)</name>
        <dbReference type="ChEBI" id="CHEBI:18420"/>
    </cofactor>
    <text evidence="5">Binds 1 Mg(2+) ion per subunit.</text>
</comment>
<comment type="subcellular location">
    <subcellularLocation>
        <location evidence="8">Secreted</location>
    </subcellularLocation>
</comment>
<comment type="tissue specificity">
    <text evidence="8">Expressed by the venom gland.</text>
</comment>
<comment type="similarity">
    <text evidence="7">Belongs to the arthropod phospholipase D family. Class II subfamily.</text>
</comment>
<comment type="caution">
    <text evidence="1 2 4">The most common activity assay for dermonecrotic toxins detects enzymatic activity by monitoring choline release from substrate. Liberation of choline from sphingomyelin (SM) or lysophosphatidylcholine (LPC) is commonly assumed to result from substrate hydrolysis, giving either ceramide-1-phosphate (C1P) or lysophosphatidic acid (LPA), respectively, as a second product. However, two studies from Lajoie and colleagues (2013 and 2015) report the observation of exclusive formation of cyclic phosphate products as second products, resulting from intramolecular transphosphatidylation. Cyclic phosphates have vastly different biological properties from their monoester counterparts, and they may be relevant to the pathology of brown spider envenomation.</text>
</comment>
<protein>
    <recommendedName>
        <fullName evidence="6">Dermonecrotic toxin LsaSicTox-alphaIB1ai</fullName>
        <ecNumber evidence="4">4.6.1.-</ecNumber>
    </recommendedName>
    <alternativeName>
        <fullName>Phospholipase D</fullName>
        <shortName>PLD</shortName>
    </alternativeName>
    <alternativeName>
        <fullName>Sphingomyelin phosphodiesterase D</fullName>
        <shortName>SMD</shortName>
        <shortName>SMase D</shortName>
        <shortName>Sphingomyelinase D</shortName>
    </alternativeName>
</protein>
<evidence type="ECO:0000250" key="1">
    <source>
        <dbReference type="UniProtKB" id="A0A0D4WTV1"/>
    </source>
</evidence>
<evidence type="ECO:0000250" key="2">
    <source>
        <dbReference type="UniProtKB" id="A0A0D4WV12"/>
    </source>
</evidence>
<evidence type="ECO:0000250" key="3">
    <source>
        <dbReference type="UniProtKB" id="P0CE80"/>
    </source>
</evidence>
<evidence type="ECO:0000250" key="4">
    <source>
        <dbReference type="UniProtKB" id="Q4ZFU2"/>
    </source>
</evidence>
<evidence type="ECO:0000250" key="5">
    <source>
        <dbReference type="UniProtKB" id="Q8I914"/>
    </source>
</evidence>
<evidence type="ECO:0000303" key="6">
    <source>
    </source>
</evidence>
<evidence type="ECO:0000305" key="7"/>
<evidence type="ECO:0000305" key="8">
    <source>
    </source>
</evidence>